<reference key="1">
    <citation type="journal article" date="2004" name="Science">
        <title>A predator unmasked: life cycle of Bdellovibrio bacteriovorus from a genomic perspective.</title>
        <authorList>
            <person name="Rendulic S."/>
            <person name="Jagtap P."/>
            <person name="Rosinus A."/>
            <person name="Eppinger M."/>
            <person name="Baar C."/>
            <person name="Lanz C."/>
            <person name="Keller H."/>
            <person name="Lambert C."/>
            <person name="Evans K.J."/>
            <person name="Goesmann A."/>
            <person name="Meyer F."/>
            <person name="Sockett R.E."/>
            <person name="Schuster S.C."/>
        </authorList>
    </citation>
    <scope>NUCLEOTIDE SEQUENCE [LARGE SCALE GENOMIC DNA]</scope>
    <source>
        <strain>ATCC 15356 / DSM 50701 / NCIMB 9529 / HD100</strain>
    </source>
</reference>
<name>RS16_BDEBA</name>
<gene>
    <name evidence="1" type="primary">rpsP</name>
    <name type="ordered locus">Bd2122</name>
</gene>
<sequence length="82" mass="9287">MAVVIRLARMGAKHEPKYRVTVADSRRYVTGKFLDILGTYIPSPKGNDKKIELDLAKVEEWIKKGAQPTDRVKHVIKLAQAK</sequence>
<proteinExistence type="inferred from homology"/>
<accession>P62227</accession>
<dbReference type="EMBL" id="BX842651">
    <property type="protein sequence ID" value="CAE79963.1"/>
    <property type="molecule type" value="Genomic_DNA"/>
</dbReference>
<dbReference type="RefSeq" id="WP_011164565.1">
    <property type="nucleotide sequence ID" value="NC_005363.1"/>
</dbReference>
<dbReference type="SMR" id="P62227"/>
<dbReference type="STRING" id="264462.Bd2122"/>
<dbReference type="GeneID" id="93013064"/>
<dbReference type="KEGG" id="bba:Bd2122"/>
<dbReference type="eggNOG" id="COG0228">
    <property type="taxonomic scope" value="Bacteria"/>
</dbReference>
<dbReference type="HOGENOM" id="CLU_100590_5_0_7"/>
<dbReference type="Proteomes" id="UP000008080">
    <property type="component" value="Chromosome"/>
</dbReference>
<dbReference type="GO" id="GO:0005737">
    <property type="term" value="C:cytoplasm"/>
    <property type="evidence" value="ECO:0007669"/>
    <property type="project" value="UniProtKB-ARBA"/>
</dbReference>
<dbReference type="GO" id="GO:0015935">
    <property type="term" value="C:small ribosomal subunit"/>
    <property type="evidence" value="ECO:0007669"/>
    <property type="project" value="TreeGrafter"/>
</dbReference>
<dbReference type="GO" id="GO:0003735">
    <property type="term" value="F:structural constituent of ribosome"/>
    <property type="evidence" value="ECO:0007669"/>
    <property type="project" value="InterPro"/>
</dbReference>
<dbReference type="GO" id="GO:0006412">
    <property type="term" value="P:translation"/>
    <property type="evidence" value="ECO:0007669"/>
    <property type="project" value="UniProtKB-UniRule"/>
</dbReference>
<dbReference type="Gene3D" id="3.30.1320.10">
    <property type="match status" value="1"/>
</dbReference>
<dbReference type="HAMAP" id="MF_00385">
    <property type="entry name" value="Ribosomal_bS16"/>
    <property type="match status" value="1"/>
</dbReference>
<dbReference type="InterPro" id="IPR000307">
    <property type="entry name" value="Ribosomal_bS16"/>
</dbReference>
<dbReference type="InterPro" id="IPR020592">
    <property type="entry name" value="Ribosomal_bS16_CS"/>
</dbReference>
<dbReference type="InterPro" id="IPR023803">
    <property type="entry name" value="Ribosomal_bS16_dom_sf"/>
</dbReference>
<dbReference type="NCBIfam" id="TIGR00002">
    <property type="entry name" value="S16"/>
    <property type="match status" value="1"/>
</dbReference>
<dbReference type="PANTHER" id="PTHR12919">
    <property type="entry name" value="30S RIBOSOMAL PROTEIN S16"/>
    <property type="match status" value="1"/>
</dbReference>
<dbReference type="PANTHER" id="PTHR12919:SF20">
    <property type="entry name" value="SMALL RIBOSOMAL SUBUNIT PROTEIN BS16M"/>
    <property type="match status" value="1"/>
</dbReference>
<dbReference type="Pfam" id="PF00886">
    <property type="entry name" value="Ribosomal_S16"/>
    <property type="match status" value="1"/>
</dbReference>
<dbReference type="SUPFAM" id="SSF54565">
    <property type="entry name" value="Ribosomal protein S16"/>
    <property type="match status" value="1"/>
</dbReference>
<dbReference type="PROSITE" id="PS00732">
    <property type="entry name" value="RIBOSOMAL_S16"/>
    <property type="match status" value="1"/>
</dbReference>
<evidence type="ECO:0000255" key="1">
    <source>
        <dbReference type="HAMAP-Rule" id="MF_00385"/>
    </source>
</evidence>
<evidence type="ECO:0000305" key="2"/>
<protein>
    <recommendedName>
        <fullName evidence="1">Small ribosomal subunit protein bS16</fullName>
    </recommendedName>
    <alternativeName>
        <fullName evidence="2">30S ribosomal protein S16</fullName>
    </alternativeName>
</protein>
<feature type="chain" id="PRO_0000167154" description="Small ribosomal subunit protein bS16">
    <location>
        <begin position="1"/>
        <end position="82"/>
    </location>
</feature>
<keyword id="KW-1185">Reference proteome</keyword>
<keyword id="KW-0687">Ribonucleoprotein</keyword>
<keyword id="KW-0689">Ribosomal protein</keyword>
<comment type="similarity">
    <text evidence="1">Belongs to the bacterial ribosomal protein bS16 family.</text>
</comment>
<organism>
    <name type="scientific">Bdellovibrio bacteriovorus (strain ATCC 15356 / DSM 50701 / NCIMB 9529 / HD100)</name>
    <dbReference type="NCBI Taxonomy" id="264462"/>
    <lineage>
        <taxon>Bacteria</taxon>
        <taxon>Pseudomonadati</taxon>
        <taxon>Bdellovibrionota</taxon>
        <taxon>Bdellovibrionia</taxon>
        <taxon>Bdellovibrionales</taxon>
        <taxon>Pseudobdellovibrionaceae</taxon>
        <taxon>Bdellovibrio</taxon>
    </lineage>
</organism>